<protein>
    <recommendedName>
        <fullName>Guanosine-diphosphatase</fullName>
        <shortName>GDPase</shortName>
        <ecNumber>3.6.1.42</ecNumber>
    </recommendedName>
</protein>
<proteinExistence type="evidence at protein level"/>
<feature type="chain" id="PRO_0000209919" description="Guanosine-diphosphatase">
    <location>
        <begin position="1"/>
        <end position="518"/>
    </location>
</feature>
<feature type="topological domain" description="Cytoplasmic" evidence="2">
    <location>
        <begin position="1"/>
        <end position="9"/>
    </location>
</feature>
<feature type="transmembrane region" description="Helical; Signal-anchor for type II membrane protein" evidence="2">
    <location>
        <begin position="10"/>
        <end position="24"/>
    </location>
</feature>
<feature type="topological domain" description="Lumenal" evidence="2">
    <location>
        <begin position="25"/>
        <end position="518"/>
    </location>
</feature>
<feature type="active site" description="Proton acceptor" evidence="1">
    <location>
        <position position="216"/>
    </location>
</feature>
<feature type="glycosylation site" description="N-linked (GlcNAc...) asparagine" evidence="2">
    <location>
        <position position="41"/>
    </location>
</feature>
<feature type="glycosylation site" description="N-linked (GlcNAc...) asparagine" evidence="2">
    <location>
        <position position="280"/>
    </location>
</feature>
<feature type="glycosylation site" description="N-linked (GlcNAc...) asparagine" evidence="2">
    <location>
        <position position="335"/>
    </location>
</feature>
<name>GDA1_YEAST</name>
<sequence length="518" mass="56822">MAPIFRNYRFAIGAFAVIMLILLIKTSSIGPPSIARTVTPNASIPKTPEDISILPVNDEPGYLQDSKTEQNYPELADAVKSQTSQTCSEEHKYVIMIDAGSTGSRVHIYKFDVCTSPPTLLDEKFDMLEPGLSSFDTDSVGAANSLDPLLKVAMNYVPIKARSCTPVAVKATAGLRLLGDAKSSKILSAVRDHLEKDYPFPVVEGDGVSIMGGDEEGVFAWITTNYLLGNIGANGPKLPTAAVFDLGGGSTQIVFEPTFPINEKMVDGEHKFDLKFGDENYTLYQFSHLGYGLKEGRNKVNSVLVENALKDGKILKGDNTKTHQLSSPCLPPKVNATNEKVTLESKETYTIDFIGPDEPSGAQCRFLTDEILNKDAQCQSPPCSFNGVHQPSLVRTFKESNDIYIFSYFYDRTRPLGMPLSFTLNELNDLARIVCKGEETWNSVFSGIAGSLDELESDSHFCLDLSFQVSLLHTGYDIPLQRELRTGKKIANKEIGWCLGASLPLLKADNWKCKIQSA</sequence>
<dbReference type="EC" id="3.6.1.42"/>
<dbReference type="EMBL" id="L19560">
    <property type="protein sequence ID" value="AAA34656.1"/>
    <property type="molecule type" value="Genomic_DNA"/>
</dbReference>
<dbReference type="EMBL" id="U18779">
    <property type="protein sequence ID" value="AAB65000.1"/>
    <property type="molecule type" value="Genomic_DNA"/>
</dbReference>
<dbReference type="EMBL" id="AY723798">
    <property type="protein sequence ID" value="AAU09715.1"/>
    <property type="molecule type" value="Genomic_DNA"/>
</dbReference>
<dbReference type="EMBL" id="BK006939">
    <property type="protein sequence ID" value="DAA07611.1"/>
    <property type="molecule type" value="Genomic_DNA"/>
</dbReference>
<dbReference type="PIR" id="A40732">
    <property type="entry name" value="A40732"/>
</dbReference>
<dbReference type="RefSeq" id="NP_010872.1">
    <property type="nucleotide sequence ID" value="NM_001178857.1"/>
</dbReference>
<dbReference type="SMR" id="P32621"/>
<dbReference type="BioGRID" id="36687">
    <property type="interactions" value="223"/>
</dbReference>
<dbReference type="DIP" id="DIP-5284N"/>
<dbReference type="FunCoup" id="P32621">
    <property type="interactions" value="458"/>
</dbReference>
<dbReference type="IntAct" id="P32621">
    <property type="interactions" value="45"/>
</dbReference>
<dbReference type="MINT" id="P32621"/>
<dbReference type="STRING" id="4932.YEL042W"/>
<dbReference type="GlyCosmos" id="P32621">
    <property type="glycosylation" value="3 sites, No reported glycans"/>
</dbReference>
<dbReference type="GlyGen" id="P32621">
    <property type="glycosylation" value="3 sites"/>
</dbReference>
<dbReference type="iPTMnet" id="P32621"/>
<dbReference type="PaxDb" id="4932-YEL042W"/>
<dbReference type="PeptideAtlas" id="P32621"/>
<dbReference type="DNASU" id="856669"/>
<dbReference type="EnsemblFungi" id="YEL042W_mRNA">
    <property type="protein sequence ID" value="YEL042W"/>
    <property type="gene ID" value="YEL042W"/>
</dbReference>
<dbReference type="GeneID" id="856669"/>
<dbReference type="KEGG" id="sce:YEL042W"/>
<dbReference type="AGR" id="SGD:S000000768"/>
<dbReference type="SGD" id="S000000768">
    <property type="gene designation" value="GDA1"/>
</dbReference>
<dbReference type="VEuPathDB" id="FungiDB:YEL042W"/>
<dbReference type="eggNOG" id="KOG1385">
    <property type="taxonomic scope" value="Eukaryota"/>
</dbReference>
<dbReference type="GeneTree" id="ENSGT01110000267162"/>
<dbReference type="HOGENOM" id="CLU_010246_4_1_1"/>
<dbReference type="InParanoid" id="P32621"/>
<dbReference type="OMA" id="WTCRIKE"/>
<dbReference type="OrthoDB" id="6372431at2759"/>
<dbReference type="BioCyc" id="YEAST:YEL042W-MONOMER"/>
<dbReference type="Reactome" id="R-SCE-8850843">
    <property type="pathway name" value="Phosphate bond hydrolysis by NTPDase proteins"/>
</dbReference>
<dbReference type="UniPathway" id="UPA00378"/>
<dbReference type="BioGRID-ORCS" id="856669">
    <property type="hits" value="4 hits in 10 CRISPR screens"/>
</dbReference>
<dbReference type="PRO" id="PR:P32621"/>
<dbReference type="Proteomes" id="UP000002311">
    <property type="component" value="Chromosome V"/>
</dbReference>
<dbReference type="RNAct" id="P32621">
    <property type="molecule type" value="protein"/>
</dbReference>
<dbReference type="GO" id="GO:0005794">
    <property type="term" value="C:Golgi apparatus"/>
    <property type="evidence" value="ECO:0000314"/>
    <property type="project" value="SGD"/>
</dbReference>
<dbReference type="GO" id="GO:0000139">
    <property type="term" value="C:Golgi membrane"/>
    <property type="evidence" value="ECO:0007669"/>
    <property type="project" value="UniProtKB-SubCell"/>
</dbReference>
<dbReference type="GO" id="GO:0016020">
    <property type="term" value="C:membrane"/>
    <property type="evidence" value="ECO:0000318"/>
    <property type="project" value="GO_Central"/>
</dbReference>
<dbReference type="GO" id="GO:0004382">
    <property type="term" value="F:GDP phosphatase activity"/>
    <property type="evidence" value="ECO:0000314"/>
    <property type="project" value="SGD"/>
</dbReference>
<dbReference type="GO" id="GO:0017111">
    <property type="term" value="F:ribonucleoside triphosphate phosphatase activity"/>
    <property type="evidence" value="ECO:0000318"/>
    <property type="project" value="GO_Central"/>
</dbReference>
<dbReference type="GO" id="GO:0045134">
    <property type="term" value="F:UDP phosphatase activity"/>
    <property type="evidence" value="ECO:0000314"/>
    <property type="project" value="SGD"/>
</dbReference>
<dbReference type="GO" id="GO:0009134">
    <property type="term" value="P:nucleoside diphosphate catabolic process"/>
    <property type="evidence" value="ECO:0000318"/>
    <property type="project" value="GO_Central"/>
</dbReference>
<dbReference type="GO" id="GO:0006486">
    <property type="term" value="P:protein glycosylation"/>
    <property type="evidence" value="ECO:0000315"/>
    <property type="project" value="SGD"/>
</dbReference>
<dbReference type="GO" id="GO:0006487">
    <property type="term" value="P:protein N-linked glycosylation"/>
    <property type="evidence" value="ECO:0000318"/>
    <property type="project" value="GO_Central"/>
</dbReference>
<dbReference type="CDD" id="cd24040">
    <property type="entry name" value="ASKHA_NBD_GDA1"/>
    <property type="match status" value="1"/>
</dbReference>
<dbReference type="FunFam" id="3.30.420.150:FF:000009">
    <property type="entry name" value="Guanosine-diphosphatase, putative"/>
    <property type="match status" value="1"/>
</dbReference>
<dbReference type="Gene3D" id="3.30.420.40">
    <property type="match status" value="1"/>
</dbReference>
<dbReference type="Gene3D" id="3.30.420.150">
    <property type="entry name" value="Exopolyphosphatase. Domain 2"/>
    <property type="match status" value="1"/>
</dbReference>
<dbReference type="InterPro" id="IPR000407">
    <property type="entry name" value="GDA1_CD39_NTPase"/>
</dbReference>
<dbReference type="PANTHER" id="PTHR11782">
    <property type="entry name" value="ADENOSINE/GUANOSINE DIPHOSPHATASE"/>
    <property type="match status" value="1"/>
</dbReference>
<dbReference type="PANTHER" id="PTHR11782:SF83">
    <property type="entry name" value="GUANOSINE-DIPHOSPHATASE"/>
    <property type="match status" value="1"/>
</dbReference>
<dbReference type="Pfam" id="PF01150">
    <property type="entry name" value="GDA1_CD39"/>
    <property type="match status" value="1"/>
</dbReference>
<dbReference type="PROSITE" id="PS01238">
    <property type="entry name" value="GDA1_CD39_NTPASE"/>
    <property type="match status" value="1"/>
</dbReference>
<evidence type="ECO:0000250" key="1"/>
<evidence type="ECO:0000255" key="2"/>
<evidence type="ECO:0000269" key="3">
    <source>
    </source>
</evidence>
<evidence type="ECO:0000269" key="4">
    <source>
    </source>
</evidence>
<evidence type="ECO:0000269" key="5">
    <source>
    </source>
</evidence>
<evidence type="ECO:0000305" key="6"/>
<comment type="function">
    <text evidence="5">After transfer of sugars to endogenous macromolecular acceptors, the enzyme converts nucleoside diphosphates to nucleoside monophosphates which in turn exit the Golgi lumen in a coupled antiporter reaction, allowing entry of additional nucleotide sugar from the cytosol.</text>
</comment>
<comment type="catalytic activity">
    <reaction>
        <text>GDP + H2O = GMP + phosphate + H(+)</text>
        <dbReference type="Rhea" id="RHEA:22156"/>
        <dbReference type="ChEBI" id="CHEBI:15377"/>
        <dbReference type="ChEBI" id="CHEBI:15378"/>
        <dbReference type="ChEBI" id="CHEBI:43474"/>
        <dbReference type="ChEBI" id="CHEBI:58115"/>
        <dbReference type="ChEBI" id="CHEBI:58189"/>
        <dbReference type="EC" id="3.6.1.42"/>
    </reaction>
</comment>
<comment type="pathway">
    <text>Protein modification; protein glycosylation.</text>
</comment>
<comment type="subunit">
    <text evidence="4">Homodimer.</text>
</comment>
<comment type="subcellular location">
    <subcellularLocation>
        <location evidence="5">Golgi apparatus membrane</location>
        <topology evidence="5">Single-pass type II membrane protein</topology>
    </subcellularLocation>
</comment>
<comment type="miscellaneous">
    <text evidence="3">Present with 8680 molecules/cell in log phase SD medium.</text>
</comment>
<comment type="similarity">
    <text evidence="6">Belongs to the GDA1/CD39 NTPase family.</text>
</comment>
<gene>
    <name type="primary">GDA1</name>
    <name type="ordered locus">YEL042W</name>
    <name type="ORF">SYGP-ORF16</name>
</gene>
<keyword id="KW-0903">Direct protein sequencing</keyword>
<keyword id="KW-0325">Glycoprotein</keyword>
<keyword id="KW-0333">Golgi apparatus</keyword>
<keyword id="KW-0378">Hydrolase</keyword>
<keyword id="KW-0472">Membrane</keyword>
<keyword id="KW-1185">Reference proteome</keyword>
<keyword id="KW-0735">Signal-anchor</keyword>
<keyword id="KW-0812">Transmembrane</keyword>
<keyword id="KW-1133">Transmembrane helix</keyword>
<reference key="1">
    <citation type="journal article" date="1993" name="J. Cell Biol.">
        <title>Guanosine diphosphatase is required for protein and sphingolipid glycosylation in the Golgi lumen of Saccharomyces cerevisiae.</title>
        <authorList>
            <person name="Abeijon C."/>
            <person name="Yanagisawa K."/>
            <person name="Mandon E.C."/>
            <person name="Haeusler A."/>
            <person name="Moremen K."/>
            <person name="Hirschberg C.B."/>
            <person name="Robbins P.W."/>
        </authorList>
    </citation>
    <scope>NUCLEOTIDE SEQUENCE [GENOMIC DNA]</scope>
    <scope>PROTEIN SEQUENCE OF 125-144; 238-257; 276-281; 366-374 AND 399-412</scope>
    <scope>FUNCTION</scope>
    <scope>SUBCELLULAR LOCATION</scope>
    <source>
        <strain>G2-9</strain>
    </source>
</reference>
<reference key="2">
    <citation type="journal article" date="1997" name="Nature">
        <title>The nucleotide sequence of Saccharomyces cerevisiae chromosome V.</title>
        <authorList>
            <person name="Dietrich F.S."/>
            <person name="Mulligan J.T."/>
            <person name="Hennessy K.M."/>
            <person name="Yelton M.A."/>
            <person name="Allen E."/>
            <person name="Araujo R."/>
            <person name="Aviles E."/>
            <person name="Berno A."/>
            <person name="Brennan T."/>
            <person name="Carpenter J."/>
            <person name="Chen E."/>
            <person name="Cherry J.M."/>
            <person name="Chung E."/>
            <person name="Duncan M."/>
            <person name="Guzman E."/>
            <person name="Hartzell G."/>
            <person name="Hunicke-Smith S."/>
            <person name="Hyman R.W."/>
            <person name="Kayser A."/>
            <person name="Komp C."/>
            <person name="Lashkari D."/>
            <person name="Lew H."/>
            <person name="Lin D."/>
            <person name="Mosedale D."/>
            <person name="Nakahara K."/>
            <person name="Namath A."/>
            <person name="Norgren R."/>
            <person name="Oefner P."/>
            <person name="Oh C."/>
            <person name="Petel F.X."/>
            <person name="Roberts D."/>
            <person name="Sehl P."/>
            <person name="Schramm S."/>
            <person name="Shogren T."/>
            <person name="Smith V."/>
            <person name="Taylor P."/>
            <person name="Wei Y."/>
            <person name="Botstein D."/>
            <person name="Davis R.W."/>
        </authorList>
    </citation>
    <scope>NUCLEOTIDE SEQUENCE [LARGE SCALE GENOMIC DNA]</scope>
    <source>
        <strain>ATCC 204508 / S288c</strain>
    </source>
</reference>
<reference key="3">
    <citation type="journal article" date="2014" name="G3 (Bethesda)">
        <title>The reference genome sequence of Saccharomyces cerevisiae: Then and now.</title>
        <authorList>
            <person name="Engel S.R."/>
            <person name="Dietrich F.S."/>
            <person name="Fisk D.G."/>
            <person name="Binkley G."/>
            <person name="Balakrishnan R."/>
            <person name="Costanzo M.C."/>
            <person name="Dwight S.S."/>
            <person name="Hitz B.C."/>
            <person name="Karra K."/>
            <person name="Nash R.S."/>
            <person name="Weng S."/>
            <person name="Wong E.D."/>
            <person name="Lloyd P."/>
            <person name="Skrzypek M.S."/>
            <person name="Miyasato S.R."/>
            <person name="Simison M."/>
            <person name="Cherry J.M."/>
        </authorList>
    </citation>
    <scope>GENOME REANNOTATION</scope>
    <source>
        <strain>ATCC 204508 / S288c</strain>
    </source>
</reference>
<reference key="4">
    <citation type="journal article" date="2007" name="Genome Res.">
        <title>Approaching a complete repository of sequence-verified protein-encoding clones for Saccharomyces cerevisiae.</title>
        <authorList>
            <person name="Hu Y."/>
            <person name="Rolfs A."/>
            <person name="Bhullar B."/>
            <person name="Murthy T.V.S."/>
            <person name="Zhu C."/>
            <person name="Berger M.F."/>
            <person name="Camargo A.A."/>
            <person name="Kelley F."/>
            <person name="McCarron S."/>
            <person name="Jepson D."/>
            <person name="Richardson A."/>
            <person name="Raphael J."/>
            <person name="Moreira D."/>
            <person name="Taycher E."/>
            <person name="Zuo D."/>
            <person name="Mohr S."/>
            <person name="Kane M.F."/>
            <person name="Williamson J."/>
            <person name="Simpson A.J.G."/>
            <person name="Bulyk M.L."/>
            <person name="Harlow E."/>
            <person name="Marsischky G."/>
            <person name="Kolodner R.D."/>
            <person name="LaBaer J."/>
        </authorList>
    </citation>
    <scope>NUCLEOTIDE SEQUENCE [GENOMIC DNA]</scope>
    <source>
        <strain>ATCC 204508 / S288c</strain>
    </source>
</reference>
<reference key="5">
    <citation type="journal article" date="1995" name="J. Biol. Chem.">
        <title>Regulation of yeast Golgi glycosylation. Guanosine diphosphatase functions as a homodimer in the membrane.</title>
        <authorList>
            <person name="Berninsone P."/>
            <person name="Lin Z.-Y."/>
            <person name="Kempner E."/>
            <person name="Hirschberg C.B."/>
        </authorList>
    </citation>
    <scope>SUBUNIT</scope>
</reference>
<reference key="6">
    <citation type="journal article" date="2003" name="Nature">
        <title>Global analysis of protein expression in yeast.</title>
        <authorList>
            <person name="Ghaemmaghami S."/>
            <person name="Huh W.-K."/>
            <person name="Bower K."/>
            <person name="Howson R.W."/>
            <person name="Belle A."/>
            <person name="Dephoure N."/>
            <person name="O'Shea E.K."/>
            <person name="Weissman J.S."/>
        </authorList>
    </citation>
    <scope>LEVEL OF PROTEIN EXPRESSION [LARGE SCALE ANALYSIS]</scope>
</reference>
<organism>
    <name type="scientific">Saccharomyces cerevisiae (strain ATCC 204508 / S288c)</name>
    <name type="common">Baker's yeast</name>
    <dbReference type="NCBI Taxonomy" id="559292"/>
    <lineage>
        <taxon>Eukaryota</taxon>
        <taxon>Fungi</taxon>
        <taxon>Dikarya</taxon>
        <taxon>Ascomycota</taxon>
        <taxon>Saccharomycotina</taxon>
        <taxon>Saccharomycetes</taxon>
        <taxon>Saccharomycetales</taxon>
        <taxon>Saccharomycetaceae</taxon>
        <taxon>Saccharomyces</taxon>
    </lineage>
</organism>
<accession>P32621</accession>
<accession>D3DLK7</accession>